<feature type="chain" id="PRO_0000429449" description="2-heptyl-3-hydroxy-4(1H)-quinolone synthase">
    <location>
        <begin position="1"/>
        <end position="382"/>
    </location>
</feature>
<gene>
    <name type="primary">pqsH</name>
    <name type="ordered locus">PA14_30630</name>
</gene>
<organism>
    <name type="scientific">Pseudomonas aeruginosa (strain UCBPP-PA14)</name>
    <dbReference type="NCBI Taxonomy" id="208963"/>
    <lineage>
        <taxon>Bacteria</taxon>
        <taxon>Pseudomonadati</taxon>
        <taxon>Pseudomonadota</taxon>
        <taxon>Gammaproteobacteria</taxon>
        <taxon>Pseudomonadales</taxon>
        <taxon>Pseudomonadaceae</taxon>
        <taxon>Pseudomonas</taxon>
    </lineage>
</organism>
<keyword id="KW-0503">Monooxygenase</keyword>
<keyword id="KW-0520">NAD</keyword>
<keyword id="KW-0560">Oxidoreductase</keyword>
<keyword id="KW-0673">Quorum sensing</keyword>
<comment type="function">
    <text evidence="1 2">Involved in the terminal step of the biosynthesis of quinolone which in addition to serve as a potent signal for quorum sensing, chelates iron and promotes the formation of membrane vesicles (MVs). Catalyzes the hydroxylation of 2-heptyl-4-quinolone (C7-HHQ) to yield 2-heptyl-3-hydroxy-4-quinolone (PQS). PqsH is also able to hydroxylate HHQ analogs having alkyl side-chain lengths of 3 (C3-HHQ), 5 (C5-HHQ) and 9 (C9-HHQ) carbons, however catalytic efficiencies are significantly reduced for substrates with alkyl side-chain lengths below 7 carbons.</text>
</comment>
<comment type="catalytic activity">
    <reaction evidence="2">
        <text>2-heptyl-4(1H)-quinolone + NADH + O2 + H(+) = 2-heptyl-3-hydroxy-4(1H)-quinolone + NAD(+) + H2O</text>
        <dbReference type="Rhea" id="RHEA:37871"/>
        <dbReference type="ChEBI" id="CHEBI:15377"/>
        <dbReference type="ChEBI" id="CHEBI:15378"/>
        <dbReference type="ChEBI" id="CHEBI:15379"/>
        <dbReference type="ChEBI" id="CHEBI:29472"/>
        <dbReference type="ChEBI" id="CHEBI:57540"/>
        <dbReference type="ChEBI" id="CHEBI:57945"/>
        <dbReference type="ChEBI" id="CHEBI:62219"/>
        <dbReference type="EC" id="1.14.13.182"/>
    </reaction>
</comment>
<comment type="biophysicochemical properties">
    <kinetics>
        <KM evidence="2">110 nM for 2-heptyl-4-quinolone (at 37 degrees Celsius)</KM>
        <KM evidence="2">520 nM for oxygen (at 37 degrees Celsius)</KM>
        <KM evidence="2">32 uM for NADH (at 37 degrees Celsius)</KM>
        <KM evidence="2">740 uM for NADPH (at 37 degrees Celsius)</KM>
        <text>kcat is 1.2 min(-1) for hydroxylation with oxygen (at 37 degrees Celsius). kcat is 2.7 min(-1) for hydroxylation with 2-heptyl-4-quinolone (at 37 degrees Celsius). kcat is 3.2 min(-1) for hydroxylation with NADH (at 37 degrees Celsius). kcat is 3.8 min(-1) for hydroxylation with NADPH (at 37 degrees Celsius).</text>
    </kinetics>
</comment>
<comment type="induction">
    <text evidence="1">By LasR.</text>
</comment>
<comment type="miscellaneous">
    <text evidence="4">Oxygen is essential for PQS production and anaerobic P.aeruginosa produces undetectable levels of MVs and display reduced killing of prokaryotic and eukaryotic cells.</text>
</comment>
<comment type="similarity">
    <text evidence="3">Belongs to the 3-hydroxybenzoate 6-hydroxylase family.</text>
</comment>
<proteinExistence type="evidence at protein level"/>
<reference key="1">
    <citation type="journal article" date="2006" name="Genome Biol.">
        <title>Genomic analysis reveals that Pseudomonas aeruginosa virulence is combinatorial.</title>
        <authorList>
            <person name="Lee D.G."/>
            <person name="Urbach J.M."/>
            <person name="Wu G."/>
            <person name="Liberati N.T."/>
            <person name="Feinbaum R.L."/>
            <person name="Miyata S."/>
            <person name="Diggins L.T."/>
            <person name="He J."/>
            <person name="Saucier M."/>
            <person name="Deziel E."/>
            <person name="Friedman L."/>
            <person name="Li L."/>
            <person name="Grills G."/>
            <person name="Montgomery K."/>
            <person name="Kucherlapati R."/>
            <person name="Rahme L.G."/>
            <person name="Ausubel F.M."/>
        </authorList>
    </citation>
    <scope>NUCLEOTIDE SEQUENCE [LARGE SCALE GENOMIC DNA]</scope>
    <source>
        <strain>UCBPP-PA14</strain>
    </source>
</reference>
<reference key="2">
    <citation type="journal article" date="2004" name="Proc. Natl. Acad. Sci. U.S.A.">
        <title>Analysis of Pseudomonas aeruginosa 4-hydroxy-2-alkylquinolines (HAQs) reveals a role for 4-hydroxy-2-heptylquinoline in cell-to-cell communication.</title>
        <authorList>
            <person name="Deziel E."/>
            <person name="Lepine F."/>
            <person name="Milot S."/>
            <person name="He J."/>
            <person name="Mindrinos M.N."/>
            <person name="Tompkins R.G."/>
            <person name="Rahme L.G."/>
        </authorList>
    </citation>
    <scope>FUNCTION</scope>
    <scope>INDUCTION</scope>
    <source>
        <strain>UCBPP-PA14</strain>
    </source>
</reference>
<reference key="3">
    <citation type="journal article" date="2010" name="Mol. Microbiol.">
        <title>Oxygen levels rapidly modulate Pseudomonas aeruginosa social behaviours via substrate limitation of PqsH.</title>
        <authorList>
            <person name="Schertzer J.W."/>
            <person name="Brown S.A."/>
            <person name="Whiteley M."/>
        </authorList>
    </citation>
    <scope>FUNCTION</scope>
    <scope>CATALYTIC ACTIVITY</scope>
    <scope>BIOPHYSICOCHEMICAL PROPERTIES</scope>
    <scope>SUBSTRATE SPECIFICITY</scope>
    <source>
        <strain>UCBPP-PA14</strain>
    </source>
</reference>
<protein>
    <recommendedName>
        <fullName>2-heptyl-3-hydroxy-4(1H)-quinolone synthase</fullName>
        <ecNumber>1.14.13.182</ecNumber>
    </recommendedName>
    <alternativeName>
        <fullName>2-heptyl-3,4-dihydroxyquinoline synthase</fullName>
    </alternativeName>
</protein>
<accession>Q02N79</accession>
<evidence type="ECO:0000269" key="1">
    <source>
    </source>
</evidence>
<evidence type="ECO:0000269" key="2">
    <source>
    </source>
</evidence>
<evidence type="ECO:0000305" key="3"/>
<evidence type="ECO:0000305" key="4">
    <source>
    </source>
</evidence>
<sequence length="382" mass="42054">MTVLIQGAGIAGLALAREFTKAGIDWLLVERASEIRPIGTGITLASNALTALSSTLDLDRLFRRGMPLAGINVYAHDGSMLMSMPSSLGGSSRGGLALQRHELHAALLEGLDESRIRVGVSIVQILDGLDHERVTLSDGTVHDCSLVVGADGIRSSVRRYVWPEATLRHSGETCWRLVVPHRLEDAELAGEVWGHGKRLGFIQISPREMYVYATLKVRREEPEDEEGFVTPQRLAAHYADFDGIGASIARLIPSATTLVHNDLEELAGASWCRGRVVLIGDAAHAMTPNLGQGAAMALEDAFLLARLWCLAPRAETLILFQQQREARIEFIRKQSWIVGRLGQWESPWSVWLRNTLVRLVPNASRRRLHQRLFTGVGEMAAQ</sequence>
<dbReference type="EC" id="1.14.13.182"/>
<dbReference type="EMBL" id="CP000438">
    <property type="protein sequence ID" value="ABJ11810.1"/>
    <property type="molecule type" value="Genomic_DNA"/>
</dbReference>
<dbReference type="RefSeq" id="WP_003119987.1">
    <property type="nucleotide sequence ID" value="NZ_CP034244.1"/>
</dbReference>
<dbReference type="SMR" id="Q02N79"/>
<dbReference type="KEGG" id="pau:PA14_30630"/>
<dbReference type="PseudoCAP" id="PA14_30630"/>
<dbReference type="HOGENOM" id="CLU_009665_19_5_6"/>
<dbReference type="BioCyc" id="PAER208963:G1G74-2565-MONOMER"/>
<dbReference type="PHI-base" id="PHI:3290"/>
<dbReference type="Proteomes" id="UP000000653">
    <property type="component" value="Chromosome"/>
</dbReference>
<dbReference type="GO" id="GO:0102164">
    <property type="term" value="F:2-heptyl-3-hydroxy-4(1H)-quinolone synthase activity"/>
    <property type="evidence" value="ECO:0007669"/>
    <property type="project" value="UniProtKB-EC"/>
</dbReference>
<dbReference type="GO" id="GO:0071949">
    <property type="term" value="F:FAD binding"/>
    <property type="evidence" value="ECO:0007669"/>
    <property type="project" value="InterPro"/>
</dbReference>
<dbReference type="GO" id="GO:0009372">
    <property type="term" value="P:quorum sensing"/>
    <property type="evidence" value="ECO:0007669"/>
    <property type="project" value="UniProtKB-KW"/>
</dbReference>
<dbReference type="Gene3D" id="3.50.50.60">
    <property type="entry name" value="FAD/NAD(P)-binding domain"/>
    <property type="match status" value="1"/>
</dbReference>
<dbReference type="InterPro" id="IPR002938">
    <property type="entry name" value="FAD-bd"/>
</dbReference>
<dbReference type="InterPro" id="IPR036188">
    <property type="entry name" value="FAD/NAD-bd_sf"/>
</dbReference>
<dbReference type="InterPro" id="IPR044560">
    <property type="entry name" value="MOase"/>
</dbReference>
<dbReference type="PANTHER" id="PTHR45934">
    <property type="entry name" value="FAD/NAD(P)-BINDING OXIDOREDUCTASE FAMILY PROTEIN"/>
    <property type="match status" value="1"/>
</dbReference>
<dbReference type="PANTHER" id="PTHR45934:SF9">
    <property type="entry name" value="FAD_NAD(P)-BINDING OXIDOREDUCTASE FAMILY PROTEIN"/>
    <property type="match status" value="1"/>
</dbReference>
<dbReference type="Pfam" id="PF01494">
    <property type="entry name" value="FAD_binding_3"/>
    <property type="match status" value="1"/>
</dbReference>
<dbReference type="PRINTS" id="PR00420">
    <property type="entry name" value="RNGMNOXGNASE"/>
</dbReference>
<dbReference type="SUPFAM" id="SSF51905">
    <property type="entry name" value="FAD/NAD(P)-binding domain"/>
    <property type="match status" value="1"/>
</dbReference>
<name>PQSH_PSEAB</name>